<accession>Q2P907</accession>
<feature type="chain" id="PRO_1000067282" description="Pimeloyl-[acyl-carrier protein] methyl ester esterase">
    <location>
        <begin position="1"/>
        <end position="253"/>
    </location>
</feature>
<feature type="active site" description="Nucleophile" evidence="1">
    <location>
        <position position="78"/>
    </location>
</feature>
<feature type="active site" evidence="1">
    <location>
        <position position="203"/>
    </location>
</feature>
<feature type="active site" evidence="1">
    <location>
        <position position="231"/>
    </location>
</feature>
<feature type="binding site" evidence="1">
    <location>
        <position position="18"/>
    </location>
    <ligand>
        <name>substrate</name>
    </ligand>
</feature>
<feature type="binding site" evidence="1">
    <location>
        <begin position="78"/>
        <end position="79"/>
    </location>
    <ligand>
        <name>substrate</name>
    </ligand>
</feature>
<feature type="binding site" evidence="1">
    <location>
        <begin position="139"/>
        <end position="143"/>
    </location>
    <ligand>
        <name>substrate</name>
    </ligand>
</feature>
<feature type="binding site" evidence="1">
    <location>
        <position position="231"/>
    </location>
    <ligand>
        <name>substrate</name>
    </ligand>
</feature>
<protein>
    <recommendedName>
        <fullName evidence="1">Pimeloyl-[acyl-carrier protein] methyl ester esterase</fullName>
        <ecNumber evidence="1">3.1.1.85</ecNumber>
    </recommendedName>
    <alternativeName>
        <fullName evidence="1">Biotin synthesis protein BioH</fullName>
    </alternativeName>
    <alternativeName>
        <fullName evidence="1">Carboxylesterase BioH</fullName>
    </alternativeName>
</protein>
<dbReference type="EC" id="3.1.1.85" evidence="1"/>
<dbReference type="EMBL" id="AP008229">
    <property type="protein sequence ID" value="BAE66970.1"/>
    <property type="molecule type" value="Genomic_DNA"/>
</dbReference>
<dbReference type="RefSeq" id="WP_011407292.1">
    <property type="nucleotide sequence ID" value="NC_007705.1"/>
</dbReference>
<dbReference type="SMR" id="Q2P907"/>
<dbReference type="ESTHER" id="xanor-bioh">
    <property type="family name" value="BioH"/>
</dbReference>
<dbReference type="KEGG" id="xom:XOO0215"/>
<dbReference type="HOGENOM" id="CLU_020336_12_2_6"/>
<dbReference type="UniPathway" id="UPA00078"/>
<dbReference type="GO" id="GO:0005737">
    <property type="term" value="C:cytoplasm"/>
    <property type="evidence" value="ECO:0007669"/>
    <property type="project" value="UniProtKB-SubCell"/>
</dbReference>
<dbReference type="GO" id="GO:0016020">
    <property type="term" value="C:membrane"/>
    <property type="evidence" value="ECO:0007669"/>
    <property type="project" value="TreeGrafter"/>
</dbReference>
<dbReference type="GO" id="GO:0090499">
    <property type="term" value="F:pimelyl-[acyl-carrier protein] methyl ester esterase activity"/>
    <property type="evidence" value="ECO:0007669"/>
    <property type="project" value="UniProtKB-EC"/>
</dbReference>
<dbReference type="GO" id="GO:0009102">
    <property type="term" value="P:biotin biosynthetic process"/>
    <property type="evidence" value="ECO:0007669"/>
    <property type="project" value="UniProtKB-UniRule"/>
</dbReference>
<dbReference type="Gene3D" id="3.40.50.1820">
    <property type="entry name" value="alpha/beta hydrolase"/>
    <property type="match status" value="1"/>
</dbReference>
<dbReference type="HAMAP" id="MF_01260">
    <property type="entry name" value="Carboxylester"/>
    <property type="match status" value="1"/>
</dbReference>
<dbReference type="InterPro" id="IPR000073">
    <property type="entry name" value="AB_hydrolase_1"/>
</dbReference>
<dbReference type="InterPro" id="IPR029058">
    <property type="entry name" value="AB_hydrolase_fold"/>
</dbReference>
<dbReference type="InterPro" id="IPR050266">
    <property type="entry name" value="AB_hydrolase_sf"/>
</dbReference>
<dbReference type="InterPro" id="IPR010076">
    <property type="entry name" value="BioH"/>
</dbReference>
<dbReference type="NCBIfam" id="TIGR01738">
    <property type="entry name" value="bioH"/>
    <property type="match status" value="1"/>
</dbReference>
<dbReference type="PANTHER" id="PTHR43798:SF31">
    <property type="entry name" value="AB HYDROLASE SUPERFAMILY PROTEIN YCLE"/>
    <property type="match status" value="1"/>
</dbReference>
<dbReference type="PANTHER" id="PTHR43798">
    <property type="entry name" value="MONOACYLGLYCEROL LIPASE"/>
    <property type="match status" value="1"/>
</dbReference>
<dbReference type="Pfam" id="PF00561">
    <property type="entry name" value="Abhydrolase_1"/>
    <property type="match status" value="1"/>
</dbReference>
<dbReference type="SUPFAM" id="SSF53474">
    <property type="entry name" value="alpha/beta-Hydrolases"/>
    <property type="match status" value="1"/>
</dbReference>
<sequence length="253" mass="27082">MHIDVIGHGPALVLLHGWALHGGVFAPLVERLAPHYQLHLVDLPGHGFSRDDSTPLALPYVVAEIAAATPPAVWLGWSLGGLFALHAAATLPQVRGLAMIAATPRFVRGSDWPDAVQRELFVQFGTELSRDYRGTLERFLALDTLGSAHARSELRSLRETLTARGEPAPEALQQGLSLLERTDLRRALPQLARPSLWIAGQRDRLVPAAGMHAAAALSPHAQALTIAGGGHAPFLGHADQVSEALQRFVASVP</sequence>
<reference key="1">
    <citation type="journal article" date="2005" name="Jpn. Agric. Res. Q.">
        <title>Genome sequence of Xanthomonas oryzae pv. oryzae suggests contribution of large numbers of effector genes and insertion sequences to its race diversity.</title>
        <authorList>
            <person name="Ochiai H."/>
            <person name="Inoue Y."/>
            <person name="Takeya M."/>
            <person name="Sasaki A."/>
            <person name="Kaku H."/>
        </authorList>
    </citation>
    <scope>NUCLEOTIDE SEQUENCE [LARGE SCALE GENOMIC DNA]</scope>
    <source>
        <strain>MAFF 311018</strain>
    </source>
</reference>
<proteinExistence type="inferred from homology"/>
<keyword id="KW-0093">Biotin biosynthesis</keyword>
<keyword id="KW-0963">Cytoplasm</keyword>
<keyword id="KW-0378">Hydrolase</keyword>
<keyword id="KW-0719">Serine esterase</keyword>
<evidence type="ECO:0000255" key="1">
    <source>
        <dbReference type="HAMAP-Rule" id="MF_01260"/>
    </source>
</evidence>
<comment type="function">
    <text evidence="1">The physiological role of BioH is to remove the methyl group introduced by BioC when the pimeloyl moiety is complete. It allows to synthesize pimeloyl-ACP via the fatty acid synthetic pathway through the hydrolysis of the ester bonds of pimeloyl-ACP esters.</text>
</comment>
<comment type="catalytic activity">
    <reaction evidence="1">
        <text>6-carboxyhexanoyl-[ACP] methyl ester + H2O = 6-carboxyhexanoyl-[ACP] + methanol + H(+)</text>
        <dbReference type="Rhea" id="RHEA:42700"/>
        <dbReference type="Rhea" id="RHEA-COMP:9955"/>
        <dbReference type="Rhea" id="RHEA-COMP:10186"/>
        <dbReference type="ChEBI" id="CHEBI:15377"/>
        <dbReference type="ChEBI" id="CHEBI:15378"/>
        <dbReference type="ChEBI" id="CHEBI:17790"/>
        <dbReference type="ChEBI" id="CHEBI:78846"/>
        <dbReference type="ChEBI" id="CHEBI:82735"/>
        <dbReference type="EC" id="3.1.1.85"/>
    </reaction>
</comment>
<comment type="pathway">
    <text evidence="1">Cofactor biosynthesis; biotin biosynthesis.</text>
</comment>
<comment type="subunit">
    <text evidence="1">Monomer.</text>
</comment>
<comment type="subcellular location">
    <subcellularLocation>
        <location evidence="1">Cytoplasm</location>
    </subcellularLocation>
</comment>
<comment type="similarity">
    <text evidence="1">Belongs to the AB hydrolase superfamily. Carboxylesterase BioH family.</text>
</comment>
<name>BIOH_XANOM</name>
<organism>
    <name type="scientific">Xanthomonas oryzae pv. oryzae (strain MAFF 311018)</name>
    <dbReference type="NCBI Taxonomy" id="342109"/>
    <lineage>
        <taxon>Bacteria</taxon>
        <taxon>Pseudomonadati</taxon>
        <taxon>Pseudomonadota</taxon>
        <taxon>Gammaproteobacteria</taxon>
        <taxon>Lysobacterales</taxon>
        <taxon>Lysobacteraceae</taxon>
        <taxon>Xanthomonas</taxon>
    </lineage>
</organism>
<gene>
    <name evidence="1" type="primary">bioH</name>
    <name type="ordered locus">XOO0215</name>
</gene>